<protein>
    <recommendedName>
        <fullName evidence="1">Large ribosomal subunit protein bL36</fullName>
    </recommendedName>
    <alternativeName>
        <fullName evidence="2">50S ribosomal protein L36</fullName>
    </alternativeName>
</protein>
<feature type="chain" id="PRO_0000126219" description="Large ribosomal subunit protein bL36">
    <location>
        <begin position="1"/>
        <end position="37"/>
    </location>
</feature>
<comment type="similarity">
    <text evidence="1">Belongs to the bacterial ribosomal protein bL36 family.</text>
</comment>
<gene>
    <name evidence="1" type="primary">rpmJ</name>
    <name type="ordered locus">MYPU_5640</name>
</gene>
<organism>
    <name type="scientific">Mycoplasmopsis pulmonis (strain UAB CTIP)</name>
    <name type="common">Mycoplasma pulmonis</name>
    <dbReference type="NCBI Taxonomy" id="272635"/>
    <lineage>
        <taxon>Bacteria</taxon>
        <taxon>Bacillati</taxon>
        <taxon>Mycoplasmatota</taxon>
        <taxon>Mycoplasmoidales</taxon>
        <taxon>Metamycoplasmataceae</taxon>
        <taxon>Mycoplasmopsis</taxon>
    </lineage>
</organism>
<reference key="1">
    <citation type="journal article" date="2001" name="Nucleic Acids Res.">
        <title>The complete genome sequence of the murine respiratory pathogen Mycoplasma pulmonis.</title>
        <authorList>
            <person name="Chambaud I."/>
            <person name="Heilig R."/>
            <person name="Ferris S."/>
            <person name="Barbe V."/>
            <person name="Samson D."/>
            <person name="Galisson F."/>
            <person name="Moszer I."/>
            <person name="Dybvig K."/>
            <person name="Wroblewski H."/>
            <person name="Viari A."/>
            <person name="Rocha E.P.C."/>
            <person name="Blanchard A."/>
        </authorList>
    </citation>
    <scope>NUCLEOTIDE SEQUENCE [LARGE SCALE GENOMIC DNA]</scope>
    <source>
        <strain>UAB CTIP</strain>
    </source>
</reference>
<proteinExistence type="inferred from homology"/>
<keyword id="KW-1185">Reference proteome</keyword>
<keyword id="KW-0687">Ribonucleoprotein</keyword>
<keyword id="KW-0689">Ribosomal protein</keyword>
<sequence length="37" mass="4351">MKVRASVKAMCKDCKNIKRKGIRRIICIQPKHKQRQG</sequence>
<dbReference type="EMBL" id="AL445565">
    <property type="protein sequence ID" value="CAC13737.1"/>
    <property type="molecule type" value="Genomic_DNA"/>
</dbReference>
<dbReference type="PIR" id="D90582">
    <property type="entry name" value="D90582"/>
</dbReference>
<dbReference type="RefSeq" id="WP_010925365.1">
    <property type="nucleotide sequence ID" value="NC_002771.1"/>
</dbReference>
<dbReference type="SMR" id="Q98Q05"/>
<dbReference type="STRING" id="272635.gene:17577171"/>
<dbReference type="KEGG" id="mpu:MYPU_5640"/>
<dbReference type="HOGENOM" id="CLU_135723_6_2_14"/>
<dbReference type="BioCyc" id="MPUL272635:G1GT6-577-MONOMER"/>
<dbReference type="Proteomes" id="UP000000528">
    <property type="component" value="Chromosome"/>
</dbReference>
<dbReference type="GO" id="GO:0005737">
    <property type="term" value="C:cytoplasm"/>
    <property type="evidence" value="ECO:0007669"/>
    <property type="project" value="UniProtKB-ARBA"/>
</dbReference>
<dbReference type="GO" id="GO:1990904">
    <property type="term" value="C:ribonucleoprotein complex"/>
    <property type="evidence" value="ECO:0007669"/>
    <property type="project" value="UniProtKB-KW"/>
</dbReference>
<dbReference type="GO" id="GO:0005840">
    <property type="term" value="C:ribosome"/>
    <property type="evidence" value="ECO:0007669"/>
    <property type="project" value="UniProtKB-KW"/>
</dbReference>
<dbReference type="GO" id="GO:0003735">
    <property type="term" value="F:structural constituent of ribosome"/>
    <property type="evidence" value="ECO:0007669"/>
    <property type="project" value="InterPro"/>
</dbReference>
<dbReference type="GO" id="GO:0006412">
    <property type="term" value="P:translation"/>
    <property type="evidence" value="ECO:0007669"/>
    <property type="project" value="UniProtKB-UniRule"/>
</dbReference>
<dbReference type="HAMAP" id="MF_00251">
    <property type="entry name" value="Ribosomal_bL36"/>
    <property type="match status" value="1"/>
</dbReference>
<dbReference type="InterPro" id="IPR000473">
    <property type="entry name" value="Ribosomal_bL36"/>
</dbReference>
<dbReference type="InterPro" id="IPR035977">
    <property type="entry name" value="Ribosomal_bL36_sp"/>
</dbReference>
<dbReference type="NCBIfam" id="TIGR01022">
    <property type="entry name" value="rpmJ_bact"/>
    <property type="match status" value="1"/>
</dbReference>
<dbReference type="PANTHER" id="PTHR42888">
    <property type="entry name" value="50S RIBOSOMAL PROTEIN L36, CHLOROPLASTIC"/>
    <property type="match status" value="1"/>
</dbReference>
<dbReference type="PANTHER" id="PTHR42888:SF1">
    <property type="entry name" value="LARGE RIBOSOMAL SUBUNIT PROTEIN BL36C"/>
    <property type="match status" value="1"/>
</dbReference>
<dbReference type="Pfam" id="PF00444">
    <property type="entry name" value="Ribosomal_L36"/>
    <property type="match status" value="1"/>
</dbReference>
<dbReference type="SUPFAM" id="SSF57840">
    <property type="entry name" value="Ribosomal protein L36"/>
    <property type="match status" value="1"/>
</dbReference>
<dbReference type="PROSITE" id="PS00828">
    <property type="entry name" value="RIBOSOMAL_L36"/>
    <property type="match status" value="1"/>
</dbReference>
<accession>Q98Q05</accession>
<evidence type="ECO:0000255" key="1">
    <source>
        <dbReference type="HAMAP-Rule" id="MF_00251"/>
    </source>
</evidence>
<evidence type="ECO:0000305" key="2"/>
<name>RL36_MYCPU</name>